<organism>
    <name type="scientific">Paraburkholderia phytofirmans (strain DSM 17436 / LMG 22146 / PsJN)</name>
    <name type="common">Burkholderia phytofirmans</name>
    <dbReference type="NCBI Taxonomy" id="398527"/>
    <lineage>
        <taxon>Bacteria</taxon>
        <taxon>Pseudomonadati</taxon>
        <taxon>Pseudomonadota</taxon>
        <taxon>Betaproteobacteria</taxon>
        <taxon>Burkholderiales</taxon>
        <taxon>Burkholderiaceae</taxon>
        <taxon>Paraburkholderia</taxon>
    </lineage>
</organism>
<name>DDL_PARPJ</name>
<feature type="chain" id="PRO_1000091168" description="D-alanine--D-alanine ligase">
    <location>
        <begin position="1"/>
        <end position="313"/>
    </location>
</feature>
<feature type="domain" description="ATP-grasp" evidence="2">
    <location>
        <begin position="108"/>
        <end position="308"/>
    </location>
</feature>
<feature type="binding site" evidence="2">
    <location>
        <begin position="138"/>
        <end position="193"/>
    </location>
    <ligand>
        <name>ATP</name>
        <dbReference type="ChEBI" id="CHEBI:30616"/>
    </ligand>
</feature>
<feature type="binding site" evidence="2">
    <location>
        <position position="262"/>
    </location>
    <ligand>
        <name>Mg(2+)</name>
        <dbReference type="ChEBI" id="CHEBI:18420"/>
        <label>1</label>
    </ligand>
</feature>
<feature type="binding site" evidence="2">
    <location>
        <position position="275"/>
    </location>
    <ligand>
        <name>Mg(2+)</name>
        <dbReference type="ChEBI" id="CHEBI:18420"/>
        <label>1</label>
    </ligand>
</feature>
<feature type="binding site" evidence="2">
    <location>
        <position position="275"/>
    </location>
    <ligand>
        <name>Mg(2+)</name>
        <dbReference type="ChEBI" id="CHEBI:18420"/>
        <label>2</label>
    </ligand>
</feature>
<feature type="binding site" evidence="2">
    <location>
        <position position="277"/>
    </location>
    <ligand>
        <name>Mg(2+)</name>
        <dbReference type="ChEBI" id="CHEBI:18420"/>
        <label>2</label>
    </ligand>
</feature>
<gene>
    <name evidence="2" type="primary">ddl</name>
    <name type="ordered locus">Bphyt_3468</name>
</gene>
<accession>B2SYX3</accession>
<sequence length="313" mass="33439">MSSIDPKQFGKVAVLLGGNSAEREVSLNSGRLVLQGLRDAGVDAHPFDPAERPLAALKEEGFVRAFNALHGGYGENGQIQGALDFYGIKYTGSGVLGSALGLDKFRTKLVWQQLGIPTPPFEAVLRGDDYEARSKEIVAKLGLPLFVKPASEGSSVAVIKVKSADALPAALIEAVKYDKIVVVEKSVEGGGEYTACIAGNLDLPVIRIVPAGEFYDYHAKYIANDTQYLIPCGLAADEEARLKVLARRAFDVLGCTDWGRADFMLDADGNPYFLEVNTAPGMTDHSLPPKAARAVGISYQELVVGVLALTLQD</sequence>
<protein>
    <recommendedName>
        <fullName evidence="2">D-alanine--D-alanine ligase</fullName>
        <ecNumber evidence="2">6.3.2.4</ecNumber>
    </recommendedName>
    <alternativeName>
        <fullName evidence="2">D-Ala-D-Ala ligase</fullName>
    </alternativeName>
    <alternativeName>
        <fullName evidence="2">D-alanylalanine synthetase</fullName>
    </alternativeName>
</protein>
<proteinExistence type="inferred from homology"/>
<reference key="1">
    <citation type="journal article" date="2011" name="J. Bacteriol.">
        <title>Complete genome sequence of the plant growth-promoting endophyte Burkholderia phytofirmans strain PsJN.</title>
        <authorList>
            <person name="Weilharter A."/>
            <person name="Mitter B."/>
            <person name="Shin M.V."/>
            <person name="Chain P.S."/>
            <person name="Nowak J."/>
            <person name="Sessitsch A."/>
        </authorList>
    </citation>
    <scope>NUCLEOTIDE SEQUENCE [LARGE SCALE GENOMIC DNA]</scope>
    <source>
        <strain>DSM 17436 / LMG 22146 / PsJN</strain>
    </source>
</reference>
<keyword id="KW-0067">ATP-binding</keyword>
<keyword id="KW-0133">Cell shape</keyword>
<keyword id="KW-0961">Cell wall biogenesis/degradation</keyword>
<keyword id="KW-0963">Cytoplasm</keyword>
<keyword id="KW-0436">Ligase</keyword>
<keyword id="KW-0460">Magnesium</keyword>
<keyword id="KW-0464">Manganese</keyword>
<keyword id="KW-0479">Metal-binding</keyword>
<keyword id="KW-0547">Nucleotide-binding</keyword>
<keyword id="KW-0573">Peptidoglycan synthesis</keyword>
<evidence type="ECO:0000250" key="1"/>
<evidence type="ECO:0000255" key="2">
    <source>
        <dbReference type="HAMAP-Rule" id="MF_00047"/>
    </source>
</evidence>
<comment type="function">
    <text evidence="2">Cell wall formation.</text>
</comment>
<comment type="catalytic activity">
    <reaction evidence="2">
        <text>2 D-alanine + ATP = D-alanyl-D-alanine + ADP + phosphate + H(+)</text>
        <dbReference type="Rhea" id="RHEA:11224"/>
        <dbReference type="ChEBI" id="CHEBI:15378"/>
        <dbReference type="ChEBI" id="CHEBI:30616"/>
        <dbReference type="ChEBI" id="CHEBI:43474"/>
        <dbReference type="ChEBI" id="CHEBI:57416"/>
        <dbReference type="ChEBI" id="CHEBI:57822"/>
        <dbReference type="ChEBI" id="CHEBI:456216"/>
        <dbReference type="EC" id="6.3.2.4"/>
    </reaction>
</comment>
<comment type="cofactor">
    <cofactor evidence="1">
        <name>Mg(2+)</name>
        <dbReference type="ChEBI" id="CHEBI:18420"/>
    </cofactor>
    <cofactor evidence="1">
        <name>Mn(2+)</name>
        <dbReference type="ChEBI" id="CHEBI:29035"/>
    </cofactor>
    <text evidence="1">Binds 2 magnesium or manganese ions per subunit.</text>
</comment>
<comment type="pathway">
    <text evidence="2">Cell wall biogenesis; peptidoglycan biosynthesis.</text>
</comment>
<comment type="subcellular location">
    <subcellularLocation>
        <location evidence="2">Cytoplasm</location>
    </subcellularLocation>
</comment>
<comment type="similarity">
    <text evidence="2">Belongs to the D-alanine--D-alanine ligase family.</text>
</comment>
<dbReference type="EC" id="6.3.2.4" evidence="2"/>
<dbReference type="EMBL" id="CP001052">
    <property type="protein sequence ID" value="ACD17858.1"/>
    <property type="molecule type" value="Genomic_DNA"/>
</dbReference>
<dbReference type="RefSeq" id="WP_012434419.1">
    <property type="nucleotide sequence ID" value="NC_010681.1"/>
</dbReference>
<dbReference type="SMR" id="B2SYX3"/>
<dbReference type="STRING" id="398527.Bphyt_3468"/>
<dbReference type="KEGG" id="bpy:Bphyt_3468"/>
<dbReference type="eggNOG" id="COG1181">
    <property type="taxonomic scope" value="Bacteria"/>
</dbReference>
<dbReference type="HOGENOM" id="CLU_039268_1_2_4"/>
<dbReference type="OrthoDB" id="9813261at2"/>
<dbReference type="UniPathway" id="UPA00219"/>
<dbReference type="Proteomes" id="UP000001739">
    <property type="component" value="Chromosome 1"/>
</dbReference>
<dbReference type="GO" id="GO:0005829">
    <property type="term" value="C:cytosol"/>
    <property type="evidence" value="ECO:0007669"/>
    <property type="project" value="TreeGrafter"/>
</dbReference>
<dbReference type="GO" id="GO:0005524">
    <property type="term" value="F:ATP binding"/>
    <property type="evidence" value="ECO:0007669"/>
    <property type="project" value="UniProtKB-KW"/>
</dbReference>
<dbReference type="GO" id="GO:0008716">
    <property type="term" value="F:D-alanine-D-alanine ligase activity"/>
    <property type="evidence" value="ECO:0007669"/>
    <property type="project" value="UniProtKB-UniRule"/>
</dbReference>
<dbReference type="GO" id="GO:0046872">
    <property type="term" value="F:metal ion binding"/>
    <property type="evidence" value="ECO:0007669"/>
    <property type="project" value="UniProtKB-KW"/>
</dbReference>
<dbReference type="GO" id="GO:0071555">
    <property type="term" value="P:cell wall organization"/>
    <property type="evidence" value="ECO:0007669"/>
    <property type="project" value="UniProtKB-KW"/>
</dbReference>
<dbReference type="GO" id="GO:0009252">
    <property type="term" value="P:peptidoglycan biosynthetic process"/>
    <property type="evidence" value="ECO:0007669"/>
    <property type="project" value="UniProtKB-UniRule"/>
</dbReference>
<dbReference type="GO" id="GO:0008360">
    <property type="term" value="P:regulation of cell shape"/>
    <property type="evidence" value="ECO:0007669"/>
    <property type="project" value="UniProtKB-KW"/>
</dbReference>
<dbReference type="FunFam" id="3.30.1490.20:FF:000007">
    <property type="entry name" value="D-alanine--D-alanine ligase"/>
    <property type="match status" value="1"/>
</dbReference>
<dbReference type="FunFam" id="3.40.50.20:FF:000013">
    <property type="entry name" value="D-alanine--D-alanine ligase"/>
    <property type="match status" value="1"/>
</dbReference>
<dbReference type="Gene3D" id="3.40.50.20">
    <property type="match status" value="1"/>
</dbReference>
<dbReference type="Gene3D" id="3.30.1490.20">
    <property type="entry name" value="ATP-grasp fold, A domain"/>
    <property type="match status" value="1"/>
</dbReference>
<dbReference type="Gene3D" id="3.30.470.20">
    <property type="entry name" value="ATP-grasp fold, B domain"/>
    <property type="match status" value="1"/>
</dbReference>
<dbReference type="HAMAP" id="MF_00047">
    <property type="entry name" value="Dala_Dala_lig"/>
    <property type="match status" value="1"/>
</dbReference>
<dbReference type="InterPro" id="IPR011761">
    <property type="entry name" value="ATP-grasp"/>
</dbReference>
<dbReference type="InterPro" id="IPR013815">
    <property type="entry name" value="ATP_grasp_subdomain_1"/>
</dbReference>
<dbReference type="InterPro" id="IPR000291">
    <property type="entry name" value="D-Ala_lig_Van_CS"/>
</dbReference>
<dbReference type="InterPro" id="IPR005905">
    <property type="entry name" value="D_ala_D_ala"/>
</dbReference>
<dbReference type="InterPro" id="IPR011095">
    <property type="entry name" value="Dala_Dala_lig_C"/>
</dbReference>
<dbReference type="InterPro" id="IPR011127">
    <property type="entry name" value="Dala_Dala_lig_N"/>
</dbReference>
<dbReference type="InterPro" id="IPR016185">
    <property type="entry name" value="PreATP-grasp_dom_sf"/>
</dbReference>
<dbReference type="NCBIfam" id="TIGR01205">
    <property type="entry name" value="D_ala_D_alaTIGR"/>
    <property type="match status" value="1"/>
</dbReference>
<dbReference type="NCBIfam" id="NF002378">
    <property type="entry name" value="PRK01372.1"/>
    <property type="match status" value="1"/>
</dbReference>
<dbReference type="PANTHER" id="PTHR23132">
    <property type="entry name" value="D-ALANINE--D-ALANINE LIGASE"/>
    <property type="match status" value="1"/>
</dbReference>
<dbReference type="PANTHER" id="PTHR23132:SF23">
    <property type="entry name" value="D-ALANINE--D-ALANINE LIGASE B"/>
    <property type="match status" value="1"/>
</dbReference>
<dbReference type="Pfam" id="PF07478">
    <property type="entry name" value="Dala_Dala_lig_C"/>
    <property type="match status" value="1"/>
</dbReference>
<dbReference type="Pfam" id="PF01820">
    <property type="entry name" value="Dala_Dala_lig_N"/>
    <property type="match status" value="1"/>
</dbReference>
<dbReference type="PIRSF" id="PIRSF039102">
    <property type="entry name" value="Ddl/VanB"/>
    <property type="match status" value="1"/>
</dbReference>
<dbReference type="SUPFAM" id="SSF56059">
    <property type="entry name" value="Glutathione synthetase ATP-binding domain-like"/>
    <property type="match status" value="1"/>
</dbReference>
<dbReference type="SUPFAM" id="SSF52440">
    <property type="entry name" value="PreATP-grasp domain"/>
    <property type="match status" value="1"/>
</dbReference>
<dbReference type="PROSITE" id="PS50975">
    <property type="entry name" value="ATP_GRASP"/>
    <property type="match status" value="1"/>
</dbReference>
<dbReference type="PROSITE" id="PS00843">
    <property type="entry name" value="DALA_DALA_LIGASE_1"/>
    <property type="match status" value="1"/>
</dbReference>
<dbReference type="PROSITE" id="PS00844">
    <property type="entry name" value="DALA_DALA_LIGASE_2"/>
    <property type="match status" value="1"/>
</dbReference>